<gene>
    <name evidence="1" type="primary">ruvC</name>
    <name type="ordered locus">lpg1287</name>
</gene>
<proteinExistence type="inferred from homology"/>
<reference key="1">
    <citation type="journal article" date="2004" name="Science">
        <title>The genomic sequence of the accidental pathogen Legionella pneumophila.</title>
        <authorList>
            <person name="Chien M."/>
            <person name="Morozova I."/>
            <person name="Shi S."/>
            <person name="Sheng H."/>
            <person name="Chen J."/>
            <person name="Gomez S.M."/>
            <person name="Asamani G."/>
            <person name="Hill K."/>
            <person name="Nuara J."/>
            <person name="Feder M."/>
            <person name="Rineer J."/>
            <person name="Greenberg J.J."/>
            <person name="Steshenko V."/>
            <person name="Park S.H."/>
            <person name="Zhao B."/>
            <person name="Teplitskaya E."/>
            <person name="Edwards J.R."/>
            <person name="Pampou S."/>
            <person name="Georghiou A."/>
            <person name="Chou I.-C."/>
            <person name="Iannuccilli W."/>
            <person name="Ulz M.E."/>
            <person name="Kim D.H."/>
            <person name="Geringer-Sameth A."/>
            <person name="Goldsberry C."/>
            <person name="Morozov P."/>
            <person name="Fischer S.G."/>
            <person name="Segal G."/>
            <person name="Qu X."/>
            <person name="Rzhetsky A."/>
            <person name="Zhang P."/>
            <person name="Cayanis E."/>
            <person name="De Jong P.J."/>
            <person name="Ju J."/>
            <person name="Kalachikov S."/>
            <person name="Shuman H.A."/>
            <person name="Russo J.J."/>
        </authorList>
    </citation>
    <scope>NUCLEOTIDE SEQUENCE [LARGE SCALE GENOMIC DNA]</scope>
    <source>
        <strain>Philadelphia 1 / ATCC 33152 / DSM 7513</strain>
    </source>
</reference>
<sequence>MTIILGIDPGSRVTGYGLIKESDRKIAYIDSGCIRTSNDTELSHKLLQIYDGICELMDHYSPTEVAIEQIFMHNNPNSALKLGHARGVAMVAAASHRAKIFEYSAREIKQSVVGYGAAEKDQVSHMVVELLQLNRAPQKDAADALAIAICHSHMRNGLSKLIGSRGTKRRRMRL</sequence>
<accession>Q5ZW01</accession>
<feature type="chain" id="PRO_0000225151" description="Crossover junction endodeoxyribonuclease RuvC">
    <location>
        <begin position="1"/>
        <end position="174"/>
    </location>
</feature>
<feature type="active site" evidence="1">
    <location>
        <position position="8"/>
    </location>
</feature>
<feature type="active site" evidence="1">
    <location>
        <position position="68"/>
    </location>
</feature>
<feature type="active site" evidence="1">
    <location>
        <position position="140"/>
    </location>
</feature>
<feature type="binding site" evidence="1">
    <location>
        <position position="8"/>
    </location>
    <ligand>
        <name>Mg(2+)</name>
        <dbReference type="ChEBI" id="CHEBI:18420"/>
        <label>1</label>
    </ligand>
</feature>
<feature type="binding site" evidence="1">
    <location>
        <position position="68"/>
    </location>
    <ligand>
        <name>Mg(2+)</name>
        <dbReference type="ChEBI" id="CHEBI:18420"/>
        <label>2</label>
    </ligand>
</feature>
<feature type="binding site" evidence="1">
    <location>
        <position position="140"/>
    </location>
    <ligand>
        <name>Mg(2+)</name>
        <dbReference type="ChEBI" id="CHEBI:18420"/>
        <label>1</label>
    </ligand>
</feature>
<dbReference type="EC" id="3.1.21.10" evidence="1"/>
<dbReference type="EMBL" id="AE017354">
    <property type="protein sequence ID" value="AAU27370.1"/>
    <property type="molecule type" value="Genomic_DNA"/>
</dbReference>
<dbReference type="RefSeq" id="WP_010947018.1">
    <property type="nucleotide sequence ID" value="NC_002942.5"/>
</dbReference>
<dbReference type="RefSeq" id="YP_095317.1">
    <property type="nucleotide sequence ID" value="NC_002942.5"/>
</dbReference>
<dbReference type="SMR" id="Q5ZW01"/>
<dbReference type="STRING" id="272624.lpg1287"/>
<dbReference type="PaxDb" id="272624-lpg1287"/>
<dbReference type="GeneID" id="57035279"/>
<dbReference type="KEGG" id="lpn:lpg1287"/>
<dbReference type="PATRIC" id="fig|272624.6.peg.1355"/>
<dbReference type="eggNOG" id="COG0817">
    <property type="taxonomic scope" value="Bacteria"/>
</dbReference>
<dbReference type="HOGENOM" id="CLU_091257_2_1_6"/>
<dbReference type="OrthoDB" id="9805499at2"/>
<dbReference type="Proteomes" id="UP000000609">
    <property type="component" value="Chromosome"/>
</dbReference>
<dbReference type="GO" id="GO:0005737">
    <property type="term" value="C:cytoplasm"/>
    <property type="evidence" value="ECO:0007669"/>
    <property type="project" value="UniProtKB-SubCell"/>
</dbReference>
<dbReference type="GO" id="GO:0048476">
    <property type="term" value="C:Holliday junction resolvase complex"/>
    <property type="evidence" value="ECO:0007669"/>
    <property type="project" value="UniProtKB-UniRule"/>
</dbReference>
<dbReference type="GO" id="GO:0008821">
    <property type="term" value="F:crossover junction DNA endonuclease activity"/>
    <property type="evidence" value="ECO:0007669"/>
    <property type="project" value="UniProtKB-UniRule"/>
</dbReference>
<dbReference type="GO" id="GO:0003677">
    <property type="term" value="F:DNA binding"/>
    <property type="evidence" value="ECO:0007669"/>
    <property type="project" value="UniProtKB-KW"/>
</dbReference>
<dbReference type="GO" id="GO:0000287">
    <property type="term" value="F:magnesium ion binding"/>
    <property type="evidence" value="ECO:0007669"/>
    <property type="project" value="UniProtKB-UniRule"/>
</dbReference>
<dbReference type="GO" id="GO:0006310">
    <property type="term" value="P:DNA recombination"/>
    <property type="evidence" value="ECO:0007669"/>
    <property type="project" value="UniProtKB-UniRule"/>
</dbReference>
<dbReference type="GO" id="GO:0006281">
    <property type="term" value="P:DNA repair"/>
    <property type="evidence" value="ECO:0007669"/>
    <property type="project" value="UniProtKB-UniRule"/>
</dbReference>
<dbReference type="CDD" id="cd16962">
    <property type="entry name" value="RuvC"/>
    <property type="match status" value="1"/>
</dbReference>
<dbReference type="FunFam" id="3.30.420.10:FF:000002">
    <property type="entry name" value="Crossover junction endodeoxyribonuclease RuvC"/>
    <property type="match status" value="1"/>
</dbReference>
<dbReference type="Gene3D" id="3.30.420.10">
    <property type="entry name" value="Ribonuclease H-like superfamily/Ribonuclease H"/>
    <property type="match status" value="1"/>
</dbReference>
<dbReference type="HAMAP" id="MF_00034">
    <property type="entry name" value="RuvC"/>
    <property type="match status" value="1"/>
</dbReference>
<dbReference type="InterPro" id="IPR012337">
    <property type="entry name" value="RNaseH-like_sf"/>
</dbReference>
<dbReference type="InterPro" id="IPR036397">
    <property type="entry name" value="RNaseH_sf"/>
</dbReference>
<dbReference type="InterPro" id="IPR020563">
    <property type="entry name" value="X-over_junc_endoDNase_Mg_BS"/>
</dbReference>
<dbReference type="InterPro" id="IPR002176">
    <property type="entry name" value="X-over_junc_endoDNase_RuvC"/>
</dbReference>
<dbReference type="NCBIfam" id="NF000711">
    <property type="entry name" value="PRK00039.2-1"/>
    <property type="match status" value="1"/>
</dbReference>
<dbReference type="NCBIfam" id="TIGR00228">
    <property type="entry name" value="ruvC"/>
    <property type="match status" value="1"/>
</dbReference>
<dbReference type="PANTHER" id="PTHR30194">
    <property type="entry name" value="CROSSOVER JUNCTION ENDODEOXYRIBONUCLEASE RUVC"/>
    <property type="match status" value="1"/>
</dbReference>
<dbReference type="PANTHER" id="PTHR30194:SF3">
    <property type="entry name" value="CROSSOVER JUNCTION ENDODEOXYRIBONUCLEASE RUVC"/>
    <property type="match status" value="1"/>
</dbReference>
<dbReference type="Pfam" id="PF02075">
    <property type="entry name" value="RuvC"/>
    <property type="match status" value="1"/>
</dbReference>
<dbReference type="PRINTS" id="PR00696">
    <property type="entry name" value="RSOLVASERUVC"/>
</dbReference>
<dbReference type="SUPFAM" id="SSF53098">
    <property type="entry name" value="Ribonuclease H-like"/>
    <property type="match status" value="1"/>
</dbReference>
<dbReference type="PROSITE" id="PS01321">
    <property type="entry name" value="RUVC"/>
    <property type="match status" value="1"/>
</dbReference>
<keyword id="KW-0963">Cytoplasm</keyword>
<keyword id="KW-0227">DNA damage</keyword>
<keyword id="KW-0233">DNA recombination</keyword>
<keyword id="KW-0234">DNA repair</keyword>
<keyword id="KW-0238">DNA-binding</keyword>
<keyword id="KW-0255">Endonuclease</keyword>
<keyword id="KW-0378">Hydrolase</keyword>
<keyword id="KW-0460">Magnesium</keyword>
<keyword id="KW-0479">Metal-binding</keyword>
<keyword id="KW-0540">Nuclease</keyword>
<keyword id="KW-1185">Reference proteome</keyword>
<comment type="function">
    <text evidence="1">The RuvA-RuvB-RuvC complex processes Holliday junction (HJ) DNA during genetic recombination and DNA repair. Endonuclease that resolves HJ intermediates. Cleaves cruciform DNA by making single-stranded nicks across the HJ at symmetrical positions within the homologous arms, yielding a 5'-phosphate and a 3'-hydroxyl group; requires a central core of homology in the junction. The consensus cleavage sequence is 5'-(A/T)TT(C/G)-3'. Cleavage occurs on the 3'-side of the TT dinucleotide at the point of strand exchange. HJ branch migration catalyzed by RuvA-RuvB allows RuvC to scan DNA until it finds its consensus sequence, where it cleaves and resolves the cruciform DNA.</text>
</comment>
<comment type="catalytic activity">
    <reaction evidence="1">
        <text>Endonucleolytic cleavage at a junction such as a reciprocal single-stranded crossover between two homologous DNA duplexes (Holliday junction).</text>
        <dbReference type="EC" id="3.1.21.10"/>
    </reaction>
</comment>
<comment type="cofactor">
    <cofactor evidence="1">
        <name>Mg(2+)</name>
        <dbReference type="ChEBI" id="CHEBI:18420"/>
    </cofactor>
    <text evidence="1">Binds 2 Mg(2+) ion per subunit.</text>
</comment>
<comment type="subunit">
    <text evidence="1">Homodimer which binds Holliday junction (HJ) DNA. The HJ becomes 2-fold symmetrical on binding to RuvC with unstacked arms; it has a different conformation from HJ DNA in complex with RuvA. In the full resolvosome a probable DNA-RuvA(4)-RuvB(12)-RuvC(2) complex forms which resolves the HJ.</text>
</comment>
<comment type="subcellular location">
    <subcellularLocation>
        <location evidence="1">Cytoplasm</location>
    </subcellularLocation>
</comment>
<comment type="similarity">
    <text evidence="1">Belongs to the RuvC family.</text>
</comment>
<protein>
    <recommendedName>
        <fullName evidence="1">Crossover junction endodeoxyribonuclease RuvC</fullName>
        <ecNumber evidence="1">3.1.21.10</ecNumber>
    </recommendedName>
    <alternativeName>
        <fullName evidence="1">Holliday junction nuclease RuvC</fullName>
    </alternativeName>
    <alternativeName>
        <fullName evidence="1">Holliday junction resolvase RuvC</fullName>
    </alternativeName>
</protein>
<name>RUVC_LEGPH</name>
<organism>
    <name type="scientific">Legionella pneumophila subsp. pneumophila (strain Philadelphia 1 / ATCC 33152 / DSM 7513)</name>
    <dbReference type="NCBI Taxonomy" id="272624"/>
    <lineage>
        <taxon>Bacteria</taxon>
        <taxon>Pseudomonadati</taxon>
        <taxon>Pseudomonadota</taxon>
        <taxon>Gammaproteobacteria</taxon>
        <taxon>Legionellales</taxon>
        <taxon>Legionellaceae</taxon>
        <taxon>Legionella</taxon>
    </lineage>
</organism>
<evidence type="ECO:0000255" key="1">
    <source>
        <dbReference type="HAMAP-Rule" id="MF_00034"/>
    </source>
</evidence>